<comment type="function">
    <text evidence="1">Probably involved in ribonucleotide reductase function.</text>
</comment>
<comment type="similarity">
    <text evidence="1">Belongs to the NrdI family.</text>
</comment>
<proteinExistence type="inferred from homology"/>
<keyword id="KW-1185">Reference proteome</keyword>
<organism>
    <name type="scientific">Staphylococcus carnosus (strain TM300)</name>
    <dbReference type="NCBI Taxonomy" id="396513"/>
    <lineage>
        <taxon>Bacteria</taxon>
        <taxon>Bacillati</taxon>
        <taxon>Bacillota</taxon>
        <taxon>Bacilli</taxon>
        <taxon>Bacillales</taxon>
        <taxon>Staphylococcaceae</taxon>
        <taxon>Staphylococcus</taxon>
    </lineage>
</organism>
<dbReference type="EMBL" id="AM295250">
    <property type="protein sequence ID" value="CAL27292.1"/>
    <property type="molecule type" value="Genomic_DNA"/>
</dbReference>
<dbReference type="RefSeq" id="WP_015899637.1">
    <property type="nucleotide sequence ID" value="NC_012121.1"/>
</dbReference>
<dbReference type="SMR" id="B9DK28"/>
<dbReference type="GeneID" id="93795307"/>
<dbReference type="KEGG" id="sca:SCA_0378"/>
<dbReference type="eggNOG" id="COG1780">
    <property type="taxonomic scope" value="Bacteria"/>
</dbReference>
<dbReference type="HOGENOM" id="CLU_114845_3_0_9"/>
<dbReference type="OrthoDB" id="350535at2"/>
<dbReference type="BioCyc" id="SCAR396513:SCA_RS01925-MONOMER"/>
<dbReference type="Proteomes" id="UP000000444">
    <property type="component" value="Chromosome"/>
</dbReference>
<dbReference type="GO" id="GO:0010181">
    <property type="term" value="F:FMN binding"/>
    <property type="evidence" value="ECO:0007669"/>
    <property type="project" value="InterPro"/>
</dbReference>
<dbReference type="GO" id="GO:0036211">
    <property type="term" value="P:protein modification process"/>
    <property type="evidence" value="ECO:0007669"/>
    <property type="project" value="InterPro"/>
</dbReference>
<dbReference type="Gene3D" id="3.40.50.360">
    <property type="match status" value="1"/>
</dbReference>
<dbReference type="HAMAP" id="MF_00128">
    <property type="entry name" value="NrdI"/>
    <property type="match status" value="1"/>
</dbReference>
<dbReference type="InterPro" id="IPR029039">
    <property type="entry name" value="Flavoprotein-like_sf"/>
</dbReference>
<dbReference type="InterPro" id="IPR020852">
    <property type="entry name" value="RNR_Ib_NrdI_bac"/>
</dbReference>
<dbReference type="InterPro" id="IPR004465">
    <property type="entry name" value="RNR_NrdI"/>
</dbReference>
<dbReference type="NCBIfam" id="TIGR00333">
    <property type="entry name" value="nrdI"/>
    <property type="match status" value="1"/>
</dbReference>
<dbReference type="PANTHER" id="PTHR37297">
    <property type="entry name" value="PROTEIN NRDI"/>
    <property type="match status" value="1"/>
</dbReference>
<dbReference type="PANTHER" id="PTHR37297:SF1">
    <property type="entry name" value="PROTEIN NRDI"/>
    <property type="match status" value="1"/>
</dbReference>
<dbReference type="Pfam" id="PF07972">
    <property type="entry name" value="Flavodoxin_NdrI"/>
    <property type="match status" value="1"/>
</dbReference>
<dbReference type="PIRSF" id="PIRSF005087">
    <property type="entry name" value="NrdI"/>
    <property type="match status" value="1"/>
</dbReference>
<dbReference type="SUPFAM" id="SSF52218">
    <property type="entry name" value="Flavoproteins"/>
    <property type="match status" value="1"/>
</dbReference>
<sequence>MKVVYFSFTGNVRRFIARSGFENTLEITNDNCAEVRIDEPYILVTSTIGFGEVPDVVQTFLRHNGTMIRGVVGSGNRNWGQNFAKASDTISKDYMVPLLMKFEVQGTKKDVEEFKDKVGHFYEDNERKAI</sequence>
<name>NRDI_STACT</name>
<accession>B9DK28</accession>
<evidence type="ECO:0000255" key="1">
    <source>
        <dbReference type="HAMAP-Rule" id="MF_00128"/>
    </source>
</evidence>
<feature type="chain" id="PRO_1000191763" description="Protein NrdI">
    <location>
        <begin position="1"/>
        <end position="130"/>
    </location>
</feature>
<protein>
    <recommendedName>
        <fullName evidence="1">Protein NrdI</fullName>
    </recommendedName>
</protein>
<gene>
    <name evidence="1" type="primary">nrdI</name>
    <name type="ordered locus">Sca_0378</name>
</gene>
<reference key="1">
    <citation type="journal article" date="2009" name="Appl. Environ. Microbiol.">
        <title>Genome analysis of the meat starter culture bacterium Staphylococcus carnosus TM300.</title>
        <authorList>
            <person name="Rosenstein R."/>
            <person name="Nerz C."/>
            <person name="Biswas L."/>
            <person name="Resch A."/>
            <person name="Raddatz G."/>
            <person name="Schuster S.C."/>
            <person name="Goetz F."/>
        </authorList>
    </citation>
    <scope>NUCLEOTIDE SEQUENCE [LARGE SCALE GENOMIC DNA]</scope>
    <source>
        <strain>TM300</strain>
    </source>
</reference>